<reference key="1">
    <citation type="submission" date="2007-05" db="EMBL/GenBank/DDBJ databases">
        <title>Complete sequence of chromosome of Acidiphilium cryptum JF-5.</title>
        <authorList>
            <consortium name="US DOE Joint Genome Institute"/>
            <person name="Copeland A."/>
            <person name="Lucas S."/>
            <person name="Lapidus A."/>
            <person name="Barry K."/>
            <person name="Detter J.C."/>
            <person name="Glavina del Rio T."/>
            <person name="Hammon N."/>
            <person name="Israni S."/>
            <person name="Dalin E."/>
            <person name="Tice H."/>
            <person name="Pitluck S."/>
            <person name="Sims D."/>
            <person name="Brettin T."/>
            <person name="Bruce D."/>
            <person name="Han C."/>
            <person name="Schmutz J."/>
            <person name="Larimer F."/>
            <person name="Land M."/>
            <person name="Hauser L."/>
            <person name="Kyrpides N."/>
            <person name="Kim E."/>
            <person name="Magnuson T."/>
            <person name="Richardson P."/>
        </authorList>
    </citation>
    <scope>NUCLEOTIDE SEQUENCE [LARGE SCALE GENOMIC DNA]</scope>
    <source>
        <strain>JF-5</strain>
    </source>
</reference>
<keyword id="KW-0963">Cytoplasm</keyword>
<keyword id="KW-0460">Magnesium</keyword>
<keyword id="KW-0479">Metal-binding</keyword>
<keyword id="KW-0548">Nucleotidyltransferase</keyword>
<keyword id="KW-1185">Reference proteome</keyword>
<keyword id="KW-0694">RNA-binding</keyword>
<keyword id="KW-0808">Transferase</keyword>
<feature type="chain" id="PRO_0000329477" description="Polyribonucleotide nucleotidyltransferase">
    <location>
        <begin position="1"/>
        <end position="717"/>
    </location>
</feature>
<feature type="domain" description="KH" evidence="1">
    <location>
        <begin position="554"/>
        <end position="613"/>
    </location>
</feature>
<feature type="domain" description="S1 motif" evidence="1">
    <location>
        <begin position="623"/>
        <end position="691"/>
    </location>
</feature>
<feature type="binding site" evidence="1">
    <location>
        <position position="487"/>
    </location>
    <ligand>
        <name>Mg(2+)</name>
        <dbReference type="ChEBI" id="CHEBI:18420"/>
    </ligand>
</feature>
<feature type="binding site" evidence="1">
    <location>
        <position position="493"/>
    </location>
    <ligand>
        <name>Mg(2+)</name>
        <dbReference type="ChEBI" id="CHEBI:18420"/>
    </ligand>
</feature>
<name>PNP_ACICJ</name>
<organism>
    <name type="scientific">Acidiphilium cryptum (strain JF-5)</name>
    <dbReference type="NCBI Taxonomy" id="349163"/>
    <lineage>
        <taxon>Bacteria</taxon>
        <taxon>Pseudomonadati</taxon>
        <taxon>Pseudomonadota</taxon>
        <taxon>Alphaproteobacteria</taxon>
        <taxon>Acetobacterales</taxon>
        <taxon>Acidocellaceae</taxon>
        <taxon>Acidiphilium</taxon>
    </lineage>
</organism>
<evidence type="ECO:0000255" key="1">
    <source>
        <dbReference type="HAMAP-Rule" id="MF_01595"/>
    </source>
</evidence>
<gene>
    <name evidence="1" type="primary">pnp</name>
    <name type="ordered locus">Acry_0369</name>
</gene>
<protein>
    <recommendedName>
        <fullName evidence="1">Polyribonucleotide nucleotidyltransferase</fullName>
        <ecNumber evidence="1">2.7.7.8</ecNumber>
    </recommendedName>
    <alternativeName>
        <fullName evidence="1">Polynucleotide phosphorylase</fullName>
        <shortName evidence="1">PNPase</shortName>
    </alternativeName>
</protein>
<comment type="function">
    <text evidence="1">Involved in mRNA degradation. Catalyzes the phosphorolysis of single-stranded polyribonucleotides processively in the 3'- to 5'-direction.</text>
</comment>
<comment type="catalytic activity">
    <reaction evidence="1">
        <text>RNA(n+1) + phosphate = RNA(n) + a ribonucleoside 5'-diphosphate</text>
        <dbReference type="Rhea" id="RHEA:22096"/>
        <dbReference type="Rhea" id="RHEA-COMP:14527"/>
        <dbReference type="Rhea" id="RHEA-COMP:17342"/>
        <dbReference type="ChEBI" id="CHEBI:43474"/>
        <dbReference type="ChEBI" id="CHEBI:57930"/>
        <dbReference type="ChEBI" id="CHEBI:140395"/>
        <dbReference type="EC" id="2.7.7.8"/>
    </reaction>
</comment>
<comment type="cofactor">
    <cofactor evidence="1">
        <name>Mg(2+)</name>
        <dbReference type="ChEBI" id="CHEBI:18420"/>
    </cofactor>
</comment>
<comment type="subcellular location">
    <subcellularLocation>
        <location evidence="1">Cytoplasm</location>
    </subcellularLocation>
</comment>
<comment type="similarity">
    <text evidence="1">Belongs to the polyribonucleotide nucleotidyltransferase family.</text>
</comment>
<accession>A5FVG2</accession>
<sequence>MMFDKYFRKELDWGGRKLILETGKVARQADGAVVASYGDTVVLATVVGARSVKPGQDFFPLTVNYQEKFYAAGRIPGGFFKREGRPTERETLTSRLIDRPIRPLFPHGFRNEVQVIVNVLSHDLENEPDIVSLVAASAALTLSGIPFFGPVGAARIGYIDGEYILNPTSAQIAESRLDLVLAGTEEGVLMVESEAHELSEETMLGAVTFGHAAFQPVIQAIIELAEHAAKDPWPLVEESDEEKALAARVDELAREGLRAAYAEREKTARHEKIGAVKAAVLETLAAEERSVEKAKGMFKELEADIVRNAILDNGIRIDGRDTRTVRPILAEVGVLPRTHGSALFTRGETQALVVATLGTAQDEQIVDAIEGEYRERFLLHYNFPPFSVGETGRVGSPGRREVGHGKLAWRAIHPLLPGKDKFPYTLRVVSEITESNGSSSMATVCGTSLALMDAGVPLPRPVAGIAMGLIKEDKGFAVLSDILGDEDHLGDMDFKVAGTEAGVTSLQMDIKITSITPEIMKIALDQAKDGRLHILGEMSKALTGAREGVSANAPRITVINVPKDKIRDVIGTGGKVIREIVEYSGCKIDIEDDGTIKIAATSDEQAQKAIDRIRSLTSEPEVGQIYTGKVVKIADFGAFVNFFGARDGLVHISELAQGRVARTGDVVKVGDTVKVKMIGLDDRGKVKLSMRVVDQATGADISDQVGAKGGRREDAAE</sequence>
<dbReference type="EC" id="2.7.7.8" evidence="1"/>
<dbReference type="EMBL" id="CP000697">
    <property type="protein sequence ID" value="ABQ29594.1"/>
    <property type="molecule type" value="Genomic_DNA"/>
</dbReference>
<dbReference type="SMR" id="A5FVG2"/>
<dbReference type="STRING" id="349163.Acry_0369"/>
<dbReference type="KEGG" id="acr:Acry_0369"/>
<dbReference type="eggNOG" id="COG1185">
    <property type="taxonomic scope" value="Bacteria"/>
</dbReference>
<dbReference type="HOGENOM" id="CLU_004217_2_2_5"/>
<dbReference type="Proteomes" id="UP000000245">
    <property type="component" value="Chromosome"/>
</dbReference>
<dbReference type="GO" id="GO:0005829">
    <property type="term" value="C:cytosol"/>
    <property type="evidence" value="ECO:0007669"/>
    <property type="project" value="TreeGrafter"/>
</dbReference>
<dbReference type="GO" id="GO:0000175">
    <property type="term" value="F:3'-5'-RNA exonuclease activity"/>
    <property type="evidence" value="ECO:0007669"/>
    <property type="project" value="TreeGrafter"/>
</dbReference>
<dbReference type="GO" id="GO:0000287">
    <property type="term" value="F:magnesium ion binding"/>
    <property type="evidence" value="ECO:0007669"/>
    <property type="project" value="UniProtKB-UniRule"/>
</dbReference>
<dbReference type="GO" id="GO:0004654">
    <property type="term" value="F:polyribonucleotide nucleotidyltransferase activity"/>
    <property type="evidence" value="ECO:0007669"/>
    <property type="project" value="UniProtKB-UniRule"/>
</dbReference>
<dbReference type="GO" id="GO:0003723">
    <property type="term" value="F:RNA binding"/>
    <property type="evidence" value="ECO:0007669"/>
    <property type="project" value="UniProtKB-UniRule"/>
</dbReference>
<dbReference type="GO" id="GO:0006402">
    <property type="term" value="P:mRNA catabolic process"/>
    <property type="evidence" value="ECO:0007669"/>
    <property type="project" value="UniProtKB-UniRule"/>
</dbReference>
<dbReference type="GO" id="GO:0006396">
    <property type="term" value="P:RNA processing"/>
    <property type="evidence" value="ECO:0007669"/>
    <property type="project" value="InterPro"/>
</dbReference>
<dbReference type="CDD" id="cd02393">
    <property type="entry name" value="KH-I_PNPase"/>
    <property type="match status" value="1"/>
</dbReference>
<dbReference type="CDD" id="cd11363">
    <property type="entry name" value="RNase_PH_PNPase_1"/>
    <property type="match status" value="1"/>
</dbReference>
<dbReference type="CDD" id="cd11364">
    <property type="entry name" value="RNase_PH_PNPase_2"/>
    <property type="match status" value="1"/>
</dbReference>
<dbReference type="CDD" id="cd04472">
    <property type="entry name" value="S1_PNPase"/>
    <property type="match status" value="1"/>
</dbReference>
<dbReference type="FunFam" id="2.40.50.140:FF:000107">
    <property type="entry name" value="Polyribonucleotide nucleotidyltransferase"/>
    <property type="match status" value="1"/>
</dbReference>
<dbReference type="FunFam" id="3.30.1370.10:FF:000001">
    <property type="entry name" value="Polyribonucleotide nucleotidyltransferase"/>
    <property type="match status" value="1"/>
</dbReference>
<dbReference type="FunFam" id="3.30.230.70:FF:000001">
    <property type="entry name" value="Polyribonucleotide nucleotidyltransferase"/>
    <property type="match status" value="1"/>
</dbReference>
<dbReference type="FunFam" id="3.30.230.70:FF:000002">
    <property type="entry name" value="Polyribonucleotide nucleotidyltransferase"/>
    <property type="match status" value="1"/>
</dbReference>
<dbReference type="Gene3D" id="3.30.230.70">
    <property type="entry name" value="GHMP Kinase, N-terminal domain"/>
    <property type="match status" value="2"/>
</dbReference>
<dbReference type="Gene3D" id="3.30.1370.10">
    <property type="entry name" value="K Homology domain, type 1"/>
    <property type="match status" value="1"/>
</dbReference>
<dbReference type="Gene3D" id="2.40.50.140">
    <property type="entry name" value="Nucleic acid-binding proteins"/>
    <property type="match status" value="1"/>
</dbReference>
<dbReference type="HAMAP" id="MF_01595">
    <property type="entry name" value="PNPase"/>
    <property type="match status" value="1"/>
</dbReference>
<dbReference type="InterPro" id="IPR001247">
    <property type="entry name" value="ExoRNase_PH_dom1"/>
</dbReference>
<dbReference type="InterPro" id="IPR015847">
    <property type="entry name" value="ExoRNase_PH_dom2"/>
</dbReference>
<dbReference type="InterPro" id="IPR036345">
    <property type="entry name" value="ExoRNase_PH_dom2_sf"/>
</dbReference>
<dbReference type="InterPro" id="IPR004087">
    <property type="entry name" value="KH_dom"/>
</dbReference>
<dbReference type="InterPro" id="IPR004088">
    <property type="entry name" value="KH_dom_type_1"/>
</dbReference>
<dbReference type="InterPro" id="IPR036612">
    <property type="entry name" value="KH_dom_type_1_sf"/>
</dbReference>
<dbReference type="InterPro" id="IPR012340">
    <property type="entry name" value="NA-bd_OB-fold"/>
</dbReference>
<dbReference type="InterPro" id="IPR012162">
    <property type="entry name" value="PNPase"/>
</dbReference>
<dbReference type="InterPro" id="IPR027408">
    <property type="entry name" value="PNPase/RNase_PH_dom_sf"/>
</dbReference>
<dbReference type="InterPro" id="IPR015848">
    <property type="entry name" value="PNPase_PH_RNA-bd_bac/org-type"/>
</dbReference>
<dbReference type="InterPro" id="IPR020568">
    <property type="entry name" value="Ribosomal_Su5_D2-typ_SF"/>
</dbReference>
<dbReference type="InterPro" id="IPR003029">
    <property type="entry name" value="S1_domain"/>
</dbReference>
<dbReference type="NCBIfam" id="TIGR03591">
    <property type="entry name" value="polynuc_phos"/>
    <property type="match status" value="1"/>
</dbReference>
<dbReference type="NCBIfam" id="NF008805">
    <property type="entry name" value="PRK11824.1"/>
    <property type="match status" value="1"/>
</dbReference>
<dbReference type="PANTHER" id="PTHR11252">
    <property type="entry name" value="POLYRIBONUCLEOTIDE NUCLEOTIDYLTRANSFERASE"/>
    <property type="match status" value="1"/>
</dbReference>
<dbReference type="PANTHER" id="PTHR11252:SF0">
    <property type="entry name" value="POLYRIBONUCLEOTIDE NUCLEOTIDYLTRANSFERASE 1, MITOCHONDRIAL"/>
    <property type="match status" value="1"/>
</dbReference>
<dbReference type="Pfam" id="PF00013">
    <property type="entry name" value="KH_1"/>
    <property type="match status" value="1"/>
</dbReference>
<dbReference type="Pfam" id="PF03726">
    <property type="entry name" value="PNPase"/>
    <property type="match status" value="1"/>
</dbReference>
<dbReference type="Pfam" id="PF01138">
    <property type="entry name" value="RNase_PH"/>
    <property type="match status" value="2"/>
</dbReference>
<dbReference type="Pfam" id="PF03725">
    <property type="entry name" value="RNase_PH_C"/>
    <property type="match status" value="2"/>
</dbReference>
<dbReference type="Pfam" id="PF00575">
    <property type="entry name" value="S1"/>
    <property type="match status" value="1"/>
</dbReference>
<dbReference type="PIRSF" id="PIRSF005499">
    <property type="entry name" value="PNPase"/>
    <property type="match status" value="1"/>
</dbReference>
<dbReference type="SMART" id="SM00322">
    <property type="entry name" value="KH"/>
    <property type="match status" value="1"/>
</dbReference>
<dbReference type="SMART" id="SM00316">
    <property type="entry name" value="S1"/>
    <property type="match status" value="1"/>
</dbReference>
<dbReference type="SUPFAM" id="SSF54791">
    <property type="entry name" value="Eukaryotic type KH-domain (KH-domain type I)"/>
    <property type="match status" value="1"/>
</dbReference>
<dbReference type="SUPFAM" id="SSF50249">
    <property type="entry name" value="Nucleic acid-binding proteins"/>
    <property type="match status" value="1"/>
</dbReference>
<dbReference type="SUPFAM" id="SSF55666">
    <property type="entry name" value="Ribonuclease PH domain 2-like"/>
    <property type="match status" value="2"/>
</dbReference>
<dbReference type="SUPFAM" id="SSF54211">
    <property type="entry name" value="Ribosomal protein S5 domain 2-like"/>
    <property type="match status" value="2"/>
</dbReference>
<dbReference type="PROSITE" id="PS50084">
    <property type="entry name" value="KH_TYPE_1"/>
    <property type="match status" value="1"/>
</dbReference>
<dbReference type="PROSITE" id="PS50126">
    <property type="entry name" value="S1"/>
    <property type="match status" value="1"/>
</dbReference>
<proteinExistence type="inferred from homology"/>